<reference key="1">
    <citation type="journal article" date="1991" name="Nucleic Acids Res.">
        <title>Characterization of the cloned BamHI restriction modification system: its nucleotide sequence, properties of the methylase, and expression in heterologous hosts.</title>
        <authorList>
            <person name="Brooks J.E."/>
            <person name="Nathan P.D."/>
            <person name="Landry D."/>
            <person name="Sznyter L.A."/>
            <person name="White-Rees P."/>
            <person name="Ives C.L."/>
            <person name="Moran L.S."/>
            <person name="Slatko B.E."/>
            <person name="Benner J.S."/>
        </authorList>
    </citation>
    <scope>NUCLEOTIDE SEQUENCE [GENOMIC DNA]</scope>
    <scope>POSSIBLE FUNCTION</scope>
    <source>
        <strain>ATCC 49763 / H</strain>
    </source>
</reference>
<reference key="2">
    <citation type="journal article" date="2003" name="Nucleic Acids Res.">
        <title>A nomenclature for restriction enzymes, DNA methyltransferases, homing endonucleases and their genes.</title>
        <authorList>
            <person name="Roberts R.J."/>
            <person name="Belfort M."/>
            <person name="Bestor T."/>
            <person name="Bhagwat A.S."/>
            <person name="Bickle T.A."/>
            <person name="Bitinaite J."/>
            <person name="Blumenthal R.M."/>
            <person name="Degtyarev S.K."/>
            <person name="Dryden D.T."/>
            <person name="Dybvig K."/>
            <person name="Firman K."/>
            <person name="Gromova E.S."/>
            <person name="Gumport R.I."/>
            <person name="Halford S.E."/>
            <person name="Hattman S."/>
            <person name="Heitman J."/>
            <person name="Hornby D.P."/>
            <person name="Janulaitis A."/>
            <person name="Jeltsch A."/>
            <person name="Josephsen J."/>
            <person name="Kiss A."/>
            <person name="Klaenhammer T.R."/>
            <person name="Kobayashi I."/>
            <person name="Kong H."/>
            <person name="Krueger D.H."/>
            <person name="Lacks S."/>
            <person name="Marinus M.G."/>
            <person name="Miyahara M."/>
            <person name="Morgan R.D."/>
            <person name="Murray N.E."/>
            <person name="Nagaraja V."/>
            <person name="Piekarowicz A."/>
            <person name="Pingoud A."/>
            <person name="Raleigh E."/>
            <person name="Rao D.N."/>
            <person name="Reich N."/>
            <person name="Repin V.E."/>
            <person name="Selker E.U."/>
            <person name="Shaw P.C."/>
            <person name="Stein D.C."/>
            <person name="Stoddard B.L."/>
            <person name="Szybalski W."/>
            <person name="Trautner T.A."/>
            <person name="Van Etten J.L."/>
            <person name="Vitor J.M."/>
            <person name="Wilson G.G."/>
            <person name="Xu S.Y."/>
        </authorList>
    </citation>
    <scope>NOMENCLATURE</scope>
</reference>
<evidence type="ECO:0000255" key="1">
    <source>
        <dbReference type="PROSITE-ProRule" id="PRU00257"/>
    </source>
</evidence>
<evidence type="ECO:0000303" key="2">
    <source>
    </source>
</evidence>
<evidence type="ECO:0000303" key="3">
    <source>
    </source>
</evidence>
<evidence type="ECO:0000305" key="4"/>
<evidence type="ECO:0000305" key="5">
    <source>
    </source>
</evidence>
<dbReference type="EMBL" id="X55285">
    <property type="protein sequence ID" value="CAA39000.1"/>
    <property type="status" value="ALT_INIT"/>
    <property type="molecule type" value="Genomic_DNA"/>
</dbReference>
<dbReference type="PIR" id="S26842">
    <property type="entry name" value="S26842"/>
</dbReference>
<dbReference type="RefSeq" id="WP_014470997.1">
    <property type="nucleotide sequence ID" value="NZ_VRTX01000001.1"/>
</dbReference>
<dbReference type="SMR" id="P23939"/>
<dbReference type="REBASE" id="203437">
    <property type="entry name" value="C.Bam1267ORF3424P"/>
</dbReference>
<dbReference type="REBASE" id="3631">
    <property type="entry name" value="C.BamHI"/>
</dbReference>
<dbReference type="OrthoDB" id="9814553at2"/>
<dbReference type="GO" id="GO:0005829">
    <property type="term" value="C:cytosol"/>
    <property type="evidence" value="ECO:0007669"/>
    <property type="project" value="TreeGrafter"/>
</dbReference>
<dbReference type="GO" id="GO:0003677">
    <property type="term" value="F:DNA binding"/>
    <property type="evidence" value="ECO:0007669"/>
    <property type="project" value="UniProtKB-KW"/>
</dbReference>
<dbReference type="GO" id="GO:0003700">
    <property type="term" value="F:DNA-binding transcription factor activity"/>
    <property type="evidence" value="ECO:0007669"/>
    <property type="project" value="TreeGrafter"/>
</dbReference>
<dbReference type="GO" id="GO:0009307">
    <property type="term" value="P:DNA restriction-modification system"/>
    <property type="evidence" value="ECO:0007669"/>
    <property type="project" value="UniProtKB-KW"/>
</dbReference>
<dbReference type="CDD" id="cd00093">
    <property type="entry name" value="HTH_XRE"/>
    <property type="match status" value="1"/>
</dbReference>
<dbReference type="Gene3D" id="1.10.260.40">
    <property type="entry name" value="lambda repressor-like DNA-binding domains"/>
    <property type="match status" value="1"/>
</dbReference>
<dbReference type="InterPro" id="IPR050807">
    <property type="entry name" value="Bact_TransReg_Diox"/>
</dbReference>
<dbReference type="InterPro" id="IPR001387">
    <property type="entry name" value="Cro/C1-type_HTH"/>
</dbReference>
<dbReference type="InterPro" id="IPR010982">
    <property type="entry name" value="Lambda_DNA-bd_dom_sf"/>
</dbReference>
<dbReference type="PANTHER" id="PTHR46797">
    <property type="entry name" value="HTH-TYPE TRANSCRIPTIONAL REGULATOR"/>
    <property type="match status" value="1"/>
</dbReference>
<dbReference type="PANTHER" id="PTHR46797:SF23">
    <property type="entry name" value="HTH-TYPE TRANSCRIPTIONAL REGULATOR SUTR"/>
    <property type="match status" value="1"/>
</dbReference>
<dbReference type="Pfam" id="PF01381">
    <property type="entry name" value="HTH_3"/>
    <property type="match status" value="1"/>
</dbReference>
<dbReference type="SMART" id="SM00530">
    <property type="entry name" value="HTH_XRE"/>
    <property type="match status" value="1"/>
</dbReference>
<dbReference type="SUPFAM" id="SSF47413">
    <property type="entry name" value="lambda repressor-like DNA-binding domains"/>
    <property type="match status" value="1"/>
</dbReference>
<dbReference type="PROSITE" id="PS50943">
    <property type="entry name" value="HTH_CROC1"/>
    <property type="match status" value="1"/>
</dbReference>
<sequence length="81" mass="9341">MTNNIRLLFGQKVRQIRLSKSNMSQEKLAFECDLHRTYISDIERGTRNVSLDNIEKISKALGVQPKDLLDFTTIGNCEQKK</sequence>
<name>CEBA_BACAM</name>
<comment type="function">
    <text evidence="5">May help modulate methylase (M) and restriction enzyme (R) expression as cells undergo physiological changes such as sporulation or transformation.</text>
</comment>
<comment type="sequence caution" evidence="4">
    <conflict type="erroneous initiation">
        <sequence resource="EMBL-CDS" id="CAA39000"/>
    </conflict>
    <text>Extended N-terminus.</text>
</comment>
<organism>
    <name type="scientific">Bacillus amyloliquefaciens</name>
    <name type="common">Bacillus velezensis</name>
    <dbReference type="NCBI Taxonomy" id="1390"/>
    <lineage>
        <taxon>Bacteria</taxon>
        <taxon>Bacillati</taxon>
        <taxon>Bacillota</taxon>
        <taxon>Bacilli</taxon>
        <taxon>Bacillales</taxon>
        <taxon>Bacillaceae</taxon>
        <taxon>Bacillus</taxon>
        <taxon>Bacillus amyloliquefaciens group</taxon>
    </lineage>
</organism>
<accession>P23939</accession>
<proteinExistence type="predicted"/>
<feature type="chain" id="PRO_0000149723" description="Control protein C.BamHI">
    <location>
        <begin position="1"/>
        <end position="81"/>
    </location>
</feature>
<feature type="domain" description="HTH cro/C1-type" evidence="1">
    <location>
        <begin position="13"/>
        <end position="68"/>
    </location>
</feature>
<feature type="DNA-binding region" description="H-T-H motif" evidence="1">
    <location>
        <begin position="25"/>
        <end position="44"/>
    </location>
</feature>
<protein>
    <recommendedName>
        <fullName evidence="2">Control protein C.BamHI</fullName>
        <shortName evidence="2">C.BamHI</shortName>
    </recommendedName>
    <alternativeName>
        <fullName evidence="3">BamHI control element</fullName>
    </alternativeName>
</protein>
<keyword id="KW-0238">DNA-binding</keyword>
<keyword id="KW-0680">Restriction system</keyword>
<keyword id="KW-0804">Transcription</keyword>
<keyword id="KW-0805">Transcription regulation</keyword>